<accession>Q7SG09</accession>
<accession>Q6MV47</accession>
<name>MRD1_NEUCR</name>
<keyword id="KW-0539">Nucleus</keyword>
<keyword id="KW-1185">Reference proteome</keyword>
<keyword id="KW-0677">Repeat</keyword>
<keyword id="KW-0687">Ribonucleoprotein</keyword>
<keyword id="KW-0694">RNA-binding</keyword>
<keyword id="KW-0698">rRNA processing</keyword>
<comment type="function">
    <text evidence="1">Involved in pre-rRNA processing.</text>
</comment>
<comment type="subcellular location">
    <subcellularLocation>
        <location evidence="1">Nucleus</location>
    </subcellularLocation>
</comment>
<comment type="similarity">
    <text evidence="4">Belongs to the RRM MRD1 family.</text>
</comment>
<comment type="sequence caution" evidence="4">
    <conflict type="erroneous gene model prediction">
        <sequence resource="EMBL-CDS" id="CAE76453"/>
    </conflict>
</comment>
<organism>
    <name type="scientific">Neurospora crassa (strain ATCC 24698 / 74-OR23-1A / CBS 708.71 / DSM 1257 / FGSC 987)</name>
    <dbReference type="NCBI Taxonomy" id="367110"/>
    <lineage>
        <taxon>Eukaryota</taxon>
        <taxon>Fungi</taxon>
        <taxon>Dikarya</taxon>
        <taxon>Ascomycota</taxon>
        <taxon>Pezizomycotina</taxon>
        <taxon>Sordariomycetes</taxon>
        <taxon>Sordariomycetidae</taxon>
        <taxon>Sordariales</taxon>
        <taxon>Sordariaceae</taxon>
        <taxon>Neurospora</taxon>
    </lineage>
</organism>
<feature type="chain" id="PRO_0000081643" description="Multiple RNA-binding domain-containing protein 1">
    <location>
        <begin position="1"/>
        <end position="827"/>
    </location>
</feature>
<feature type="domain" description="RRM 1" evidence="2">
    <location>
        <begin position="5"/>
        <end position="78"/>
    </location>
</feature>
<feature type="domain" description="RRM 2" evidence="2">
    <location>
        <begin position="308"/>
        <end position="384"/>
    </location>
</feature>
<feature type="domain" description="RRM 3" evidence="2">
    <location>
        <begin position="489"/>
        <end position="560"/>
    </location>
</feature>
<feature type="domain" description="RRM 4" evidence="2">
    <location>
        <begin position="599"/>
        <end position="682"/>
    </location>
</feature>
<feature type="domain" description="RRM 5" evidence="2">
    <location>
        <begin position="704"/>
        <end position="781"/>
    </location>
</feature>
<feature type="region of interest" description="Disordered" evidence="3">
    <location>
        <begin position="77"/>
        <end position="116"/>
    </location>
</feature>
<feature type="region of interest" description="Disordered" evidence="3">
    <location>
        <begin position="176"/>
        <end position="230"/>
    </location>
</feature>
<feature type="region of interest" description="Disordered" evidence="3">
    <location>
        <begin position="256"/>
        <end position="299"/>
    </location>
</feature>
<feature type="compositionally biased region" description="Acidic residues" evidence="3">
    <location>
        <begin position="179"/>
        <end position="189"/>
    </location>
</feature>
<feature type="compositionally biased region" description="Low complexity" evidence="3">
    <location>
        <begin position="208"/>
        <end position="225"/>
    </location>
</feature>
<feature type="compositionally biased region" description="Low complexity" evidence="3">
    <location>
        <begin position="256"/>
        <end position="270"/>
    </location>
</feature>
<feature type="compositionally biased region" description="Basic and acidic residues" evidence="3">
    <location>
        <begin position="277"/>
        <end position="288"/>
    </location>
</feature>
<sequence>MESSSRIFVKNLPPTITEAEFRKHFSAEGRQVTDVKLIPARHIGFVGYKSAEDAARAVKYFNRSFIRMSRISVDIAKPIADSKPQHKSPSKGSSKDADPKNAPKVLPPNTKVTAAAVPKVEAAPDAPKRKLDVLDEADPKLQEYLDVMGAHPSKKMRNAEGLPTTVDEVLAPAVPAGLEDGESDDEYEDIPSRTHNQSHTADQEMVDAPLAASAEPSESAPPVSLDATDDDWLRSRTNRLLDLVDPEDAAFALRPAASGSAAVSVPSTSVENTASAKPEEHPAEDSREMAATSTHDPESAISLIEKTSRLFLRNLSYTVTEDDVREHFAKFGILVEVHVPLDSKGHSKGFAMIRYEKPASALAAFQTDGTVFQGRIVHILPAAAKRENKLDEFALSKLPLKKQQLLRKKAEAASSTFNWNSLFMSQDAVNTAMAERLGVSKAELLDPTDASAAVKQAVAETTVIQEAKQYFAANGVNIEAFKTQQRGDTTILVKNIKNTTIEELRTLFEEHGTVLRVLMPPSGTIAIVQFAQPVQCRTAFARKAYSRFKDSVLFLEKGPKGLFTDNVAVPTDARPAGVQKPSVADLLERDDAEEQLETSSLFVRNLNFSTTSQGLTDAFKHLDGFVQAKVKTKTDPKKPGQVLSMGFGFVAFRTKDQAQAALKVMDGQVLDAHKISVKASHRGLDAAEERRREDMAKKAANQGTKLVVKNLPFEVTKKEVRTLFSAYGKLVALRIPKKFNQSSRGFAFAEFSTAKEALNAFNSLKDTHILGRRLVIDFAQAEDIDPEDQIAAMEKKTRAQVNKVALQQLTGTGRAKVTIGDNDEDEV</sequence>
<reference key="1">
    <citation type="journal article" date="2003" name="Nucleic Acids Res.">
        <title>What's in the genome of a filamentous fungus? Analysis of the Neurospora genome sequence.</title>
        <authorList>
            <person name="Mannhaupt G."/>
            <person name="Montrone C."/>
            <person name="Haase D."/>
            <person name="Mewes H.-W."/>
            <person name="Aign V."/>
            <person name="Hoheisel J.D."/>
            <person name="Fartmann B."/>
            <person name="Nyakatura G."/>
            <person name="Kempken F."/>
            <person name="Maier J."/>
            <person name="Schulte U."/>
        </authorList>
    </citation>
    <scope>NUCLEOTIDE SEQUENCE [LARGE SCALE GENOMIC DNA]</scope>
    <source>
        <strain>ATCC 24698 / 74-OR23-1A / CBS 708.71 / DSM 1257 / FGSC 987</strain>
    </source>
</reference>
<reference key="2">
    <citation type="journal article" date="2003" name="Nature">
        <title>The genome sequence of the filamentous fungus Neurospora crassa.</title>
        <authorList>
            <person name="Galagan J.E."/>
            <person name="Calvo S.E."/>
            <person name="Borkovich K.A."/>
            <person name="Selker E.U."/>
            <person name="Read N.D."/>
            <person name="Jaffe D.B."/>
            <person name="FitzHugh W."/>
            <person name="Ma L.-J."/>
            <person name="Smirnov S."/>
            <person name="Purcell S."/>
            <person name="Rehman B."/>
            <person name="Elkins T."/>
            <person name="Engels R."/>
            <person name="Wang S."/>
            <person name="Nielsen C.B."/>
            <person name="Butler J."/>
            <person name="Endrizzi M."/>
            <person name="Qui D."/>
            <person name="Ianakiev P."/>
            <person name="Bell-Pedersen D."/>
            <person name="Nelson M.A."/>
            <person name="Werner-Washburne M."/>
            <person name="Selitrennikoff C.P."/>
            <person name="Kinsey J.A."/>
            <person name="Braun E.L."/>
            <person name="Zelter A."/>
            <person name="Schulte U."/>
            <person name="Kothe G.O."/>
            <person name="Jedd G."/>
            <person name="Mewes H.-W."/>
            <person name="Staben C."/>
            <person name="Marcotte E."/>
            <person name="Greenberg D."/>
            <person name="Roy A."/>
            <person name="Foley K."/>
            <person name="Naylor J."/>
            <person name="Stange-Thomann N."/>
            <person name="Barrett R."/>
            <person name="Gnerre S."/>
            <person name="Kamal M."/>
            <person name="Kamvysselis M."/>
            <person name="Mauceli E.W."/>
            <person name="Bielke C."/>
            <person name="Rudd S."/>
            <person name="Frishman D."/>
            <person name="Krystofova S."/>
            <person name="Rasmussen C."/>
            <person name="Metzenberg R.L."/>
            <person name="Perkins D.D."/>
            <person name="Kroken S."/>
            <person name="Cogoni C."/>
            <person name="Macino G."/>
            <person name="Catcheside D.E.A."/>
            <person name="Li W."/>
            <person name="Pratt R.J."/>
            <person name="Osmani S.A."/>
            <person name="DeSouza C.P.C."/>
            <person name="Glass N.L."/>
            <person name="Orbach M.J."/>
            <person name="Berglund J.A."/>
            <person name="Voelker R."/>
            <person name="Yarden O."/>
            <person name="Plamann M."/>
            <person name="Seiler S."/>
            <person name="Dunlap J.C."/>
            <person name="Radford A."/>
            <person name="Aramayo R."/>
            <person name="Natvig D.O."/>
            <person name="Alex L.A."/>
            <person name="Mannhaupt G."/>
            <person name="Ebbole D.J."/>
            <person name="Freitag M."/>
            <person name="Paulsen I."/>
            <person name="Sachs M.S."/>
            <person name="Lander E.S."/>
            <person name="Nusbaum C."/>
            <person name="Birren B.W."/>
        </authorList>
    </citation>
    <scope>NUCLEOTIDE SEQUENCE [LARGE SCALE GENOMIC DNA]</scope>
    <source>
        <strain>ATCC 24698 / 74-OR23-1A / CBS 708.71 / DSM 1257 / FGSC 987</strain>
    </source>
</reference>
<evidence type="ECO:0000250" key="1"/>
<evidence type="ECO:0000255" key="2">
    <source>
        <dbReference type="PROSITE-ProRule" id="PRU00176"/>
    </source>
</evidence>
<evidence type="ECO:0000256" key="3">
    <source>
        <dbReference type="SAM" id="MobiDB-lite"/>
    </source>
</evidence>
<evidence type="ECO:0000305" key="4"/>
<gene>
    <name type="primary">mrd-1</name>
    <name type="ORF">53H1.110</name>
    <name type="ORF">NCU02611</name>
</gene>
<dbReference type="EMBL" id="BX842633">
    <property type="protein sequence ID" value="CAE76453.1"/>
    <property type="status" value="ALT_SEQ"/>
    <property type="molecule type" value="Genomic_DNA"/>
</dbReference>
<dbReference type="EMBL" id="CM002236">
    <property type="protein sequence ID" value="EAA35778.1"/>
    <property type="molecule type" value="Genomic_DNA"/>
</dbReference>
<dbReference type="RefSeq" id="XP_965014.1">
    <property type="nucleotide sequence ID" value="XM_959921.2"/>
</dbReference>
<dbReference type="SMR" id="Q7SG09"/>
<dbReference type="FunCoup" id="Q7SG09">
    <property type="interactions" value="1105"/>
</dbReference>
<dbReference type="STRING" id="367110.Q7SG09"/>
<dbReference type="PaxDb" id="5141-EFNCRP00000002082"/>
<dbReference type="EnsemblFungi" id="EAA35778">
    <property type="protein sequence ID" value="EAA35778"/>
    <property type="gene ID" value="NCU02611"/>
</dbReference>
<dbReference type="GeneID" id="3881154"/>
<dbReference type="KEGG" id="ncr:NCU02611"/>
<dbReference type="VEuPathDB" id="FungiDB:NCU02611"/>
<dbReference type="HOGENOM" id="CLU_008479_0_0_1"/>
<dbReference type="InParanoid" id="Q7SG09"/>
<dbReference type="OrthoDB" id="439639at2759"/>
<dbReference type="Proteomes" id="UP000001805">
    <property type="component" value="Chromosome 1, Linkage Group I"/>
</dbReference>
<dbReference type="GO" id="GO:0030686">
    <property type="term" value="C:90S preribosome"/>
    <property type="evidence" value="ECO:0007669"/>
    <property type="project" value="EnsemblFungi"/>
</dbReference>
<dbReference type="GO" id="GO:0016607">
    <property type="term" value="C:nuclear speck"/>
    <property type="evidence" value="ECO:0000318"/>
    <property type="project" value="GO_Central"/>
</dbReference>
<dbReference type="GO" id="GO:0005730">
    <property type="term" value="C:nucleolus"/>
    <property type="evidence" value="ECO:0000318"/>
    <property type="project" value="GO_Central"/>
</dbReference>
<dbReference type="GO" id="GO:0032040">
    <property type="term" value="C:small-subunit processome"/>
    <property type="evidence" value="ECO:0007669"/>
    <property type="project" value="EnsemblFungi"/>
</dbReference>
<dbReference type="GO" id="GO:0003723">
    <property type="term" value="F:RNA binding"/>
    <property type="evidence" value="ECO:0000318"/>
    <property type="project" value="GO_Central"/>
</dbReference>
<dbReference type="GO" id="GO:0042134">
    <property type="term" value="F:rRNA primary transcript binding"/>
    <property type="evidence" value="ECO:0007669"/>
    <property type="project" value="EnsemblFungi"/>
</dbReference>
<dbReference type="GO" id="GO:0000480">
    <property type="term" value="P:endonucleolytic cleavage in 5'-ETS of tricistronic rRNA transcript (SSU-rRNA, 5.8S rRNA, LSU-rRNA)"/>
    <property type="evidence" value="ECO:0007669"/>
    <property type="project" value="EnsemblFungi"/>
</dbReference>
<dbReference type="GO" id="GO:0000447">
    <property type="term" value="P:endonucleolytic cleavage in ITS1 to separate SSU-rRNA from 5.8S rRNA and LSU-rRNA from tricistronic rRNA transcript (SSU-rRNA, 5.8S rRNA, LSU-rRNA)"/>
    <property type="evidence" value="ECO:0007669"/>
    <property type="project" value="EnsemblFungi"/>
</dbReference>
<dbReference type="GO" id="GO:0000472">
    <property type="term" value="P:endonucleolytic cleavage to generate mature 5'-end of SSU-rRNA from (SSU-rRNA, 5.8S rRNA, LSU-rRNA)"/>
    <property type="evidence" value="ECO:0007669"/>
    <property type="project" value="EnsemblFungi"/>
</dbReference>
<dbReference type="GO" id="GO:0034462">
    <property type="term" value="P:small-subunit processome assembly"/>
    <property type="evidence" value="ECO:0007669"/>
    <property type="project" value="EnsemblFungi"/>
</dbReference>
<dbReference type="CDD" id="cd12565">
    <property type="entry name" value="RRM1_MRD1"/>
    <property type="match status" value="1"/>
</dbReference>
<dbReference type="CDD" id="cd12568">
    <property type="entry name" value="RRM3_MRD1"/>
    <property type="match status" value="1"/>
</dbReference>
<dbReference type="CDD" id="cd12316">
    <property type="entry name" value="RRM3_RBM19_RRM2_MRD1"/>
    <property type="match status" value="1"/>
</dbReference>
<dbReference type="CDD" id="cd12319">
    <property type="entry name" value="RRM4_MRD1"/>
    <property type="match status" value="1"/>
</dbReference>
<dbReference type="CDD" id="cd12570">
    <property type="entry name" value="RRM5_MRD1"/>
    <property type="match status" value="1"/>
</dbReference>
<dbReference type="FunFam" id="3.30.70.330:FF:000247">
    <property type="entry name" value="Multiple RNA-binding domain-containing protein 1"/>
    <property type="match status" value="1"/>
</dbReference>
<dbReference type="FunFam" id="3.30.70.330:FF:000452">
    <property type="entry name" value="Multiple RNA-binding domain-containing protein 1"/>
    <property type="match status" value="1"/>
</dbReference>
<dbReference type="Gene3D" id="3.30.70.330">
    <property type="match status" value="5"/>
</dbReference>
<dbReference type="InterPro" id="IPR034482">
    <property type="entry name" value="Mrd1_RRM3"/>
</dbReference>
<dbReference type="InterPro" id="IPR012677">
    <property type="entry name" value="Nucleotide-bd_a/b_plait_sf"/>
</dbReference>
<dbReference type="InterPro" id="IPR035979">
    <property type="entry name" value="RBD_domain_sf"/>
</dbReference>
<dbReference type="InterPro" id="IPR000504">
    <property type="entry name" value="RRM_dom"/>
</dbReference>
<dbReference type="InterPro" id="IPR051945">
    <property type="entry name" value="RRM_MRD1_RNA_proc_ribogen"/>
</dbReference>
<dbReference type="PANTHER" id="PTHR48039">
    <property type="entry name" value="RNA-BINDING MOTIF PROTEIN 14B"/>
    <property type="match status" value="1"/>
</dbReference>
<dbReference type="PANTHER" id="PTHR48039:SF5">
    <property type="entry name" value="RNA-BINDING PROTEIN 28"/>
    <property type="match status" value="1"/>
</dbReference>
<dbReference type="Pfam" id="PF00076">
    <property type="entry name" value="RRM_1"/>
    <property type="match status" value="4"/>
</dbReference>
<dbReference type="SMART" id="SM00360">
    <property type="entry name" value="RRM"/>
    <property type="match status" value="5"/>
</dbReference>
<dbReference type="SUPFAM" id="SSF54928">
    <property type="entry name" value="RNA-binding domain, RBD"/>
    <property type="match status" value="4"/>
</dbReference>
<dbReference type="PROSITE" id="PS50102">
    <property type="entry name" value="RRM"/>
    <property type="match status" value="4"/>
</dbReference>
<protein>
    <recommendedName>
        <fullName>Multiple RNA-binding domain-containing protein 1</fullName>
    </recommendedName>
</protein>
<proteinExistence type="inferred from homology"/>